<sequence>MESALPSIFTLVIIAEFIIGNLSNGFIVLINCIDWVSKRELSSVDKLLIILAISRIGLIWEILVSWFLALHSLAIFVSGTGLRIMIFSWIVSNHFNLWLATILSIFYLLKIASFSSPAFLYLKRRVNKVILMILLGTLVFLFLNLIQINMLIKDWLDRYERNTTWNFSMSDFETFSVSVRFTMTMFSLTPFTVAFISFLLLVFSLQKHLQKMQLNYKGHRDPRTKVHTNALKIVISFLLFYASFFLSILISWISELYQNTVIYMLCETIGAFYPSSHSFLLILGNAKLRQAFLLVAAKVWAKR</sequence>
<evidence type="ECO:0000250" key="1"/>
<evidence type="ECO:0000255" key="2"/>
<evidence type="ECO:0000305" key="3"/>
<gene>
    <name type="primary">TAS2R13</name>
</gene>
<feature type="chain" id="PRO_0000082248" description="Taste receptor type 2 member 13">
    <location>
        <begin position="1"/>
        <end position="303"/>
    </location>
</feature>
<feature type="topological domain" description="Extracellular" evidence="2">
    <location>
        <begin position="1"/>
        <end position="7"/>
    </location>
</feature>
<feature type="transmembrane region" description="Helical; Name=1" evidence="2">
    <location>
        <begin position="8"/>
        <end position="28"/>
    </location>
</feature>
<feature type="topological domain" description="Cytoplasmic" evidence="2">
    <location>
        <begin position="29"/>
        <end position="55"/>
    </location>
</feature>
<feature type="transmembrane region" description="Helical; Name=2" evidence="2">
    <location>
        <begin position="56"/>
        <end position="76"/>
    </location>
</feature>
<feature type="topological domain" description="Extracellular" evidence="2">
    <location>
        <begin position="77"/>
        <end position="85"/>
    </location>
</feature>
<feature type="transmembrane region" description="Helical; Name=3" evidence="2">
    <location>
        <begin position="86"/>
        <end position="106"/>
    </location>
</feature>
<feature type="topological domain" description="Cytoplasmic" evidence="2">
    <location>
        <begin position="107"/>
        <end position="128"/>
    </location>
</feature>
<feature type="transmembrane region" description="Helical; Name=4" evidence="2">
    <location>
        <begin position="129"/>
        <end position="149"/>
    </location>
</feature>
<feature type="topological domain" description="Extracellular" evidence="2">
    <location>
        <begin position="150"/>
        <end position="184"/>
    </location>
</feature>
<feature type="transmembrane region" description="Helical; Name=5" evidence="2">
    <location>
        <begin position="185"/>
        <end position="205"/>
    </location>
</feature>
<feature type="topological domain" description="Cytoplasmic" evidence="2">
    <location>
        <begin position="206"/>
        <end position="232"/>
    </location>
</feature>
<feature type="transmembrane region" description="Helical; Name=6" evidence="2">
    <location>
        <begin position="233"/>
        <end position="253"/>
    </location>
</feature>
<feature type="topological domain" description="Extracellular" evidence="2">
    <location>
        <begin position="254"/>
        <end position="261"/>
    </location>
</feature>
<feature type="transmembrane region" description="Helical; Name=7" evidence="2">
    <location>
        <begin position="262"/>
        <end position="282"/>
    </location>
</feature>
<feature type="topological domain" description="Cytoplasmic" evidence="2">
    <location>
        <begin position="283"/>
        <end position="303"/>
    </location>
</feature>
<feature type="glycosylation site" description="N-linked (GlcNAc...) asparagine" evidence="2">
    <location>
        <position position="162"/>
    </location>
</feature>
<feature type="glycosylation site" description="N-linked (GlcNAc...) asparagine" evidence="2">
    <location>
        <position position="166"/>
    </location>
</feature>
<organism>
    <name type="scientific">Pan paniscus</name>
    <name type="common">Pygmy chimpanzee</name>
    <name type="synonym">Bonobo</name>
    <dbReference type="NCBI Taxonomy" id="9597"/>
    <lineage>
        <taxon>Eukaryota</taxon>
        <taxon>Metazoa</taxon>
        <taxon>Chordata</taxon>
        <taxon>Craniata</taxon>
        <taxon>Vertebrata</taxon>
        <taxon>Euteleostomi</taxon>
        <taxon>Mammalia</taxon>
        <taxon>Eutheria</taxon>
        <taxon>Euarchontoglires</taxon>
        <taxon>Primates</taxon>
        <taxon>Haplorrhini</taxon>
        <taxon>Catarrhini</taxon>
        <taxon>Hominidae</taxon>
        <taxon>Pan</taxon>
    </lineage>
</organism>
<proteinExistence type="inferred from homology"/>
<accession>Q646D8</accession>
<keyword id="KW-0297">G-protein coupled receptor</keyword>
<keyword id="KW-0325">Glycoprotein</keyword>
<keyword id="KW-0472">Membrane</keyword>
<keyword id="KW-0675">Receptor</keyword>
<keyword id="KW-1185">Reference proteome</keyword>
<keyword id="KW-0716">Sensory transduction</keyword>
<keyword id="KW-0919">Taste</keyword>
<keyword id="KW-0807">Transducer</keyword>
<keyword id="KW-0812">Transmembrane</keyword>
<keyword id="KW-1133">Transmembrane helix</keyword>
<reference key="1">
    <citation type="journal article" date="2005" name="Mol. Biol. Evol.">
        <title>Evolution of bitter taste receptors in humans and apes.</title>
        <authorList>
            <person name="Fischer A."/>
            <person name="Gilad Y."/>
            <person name="Man O."/>
            <person name="Paeaebo S."/>
        </authorList>
    </citation>
    <scope>NUCLEOTIDE SEQUENCE [GENOMIC DNA]</scope>
</reference>
<reference key="2">
    <citation type="journal article" date="2004" name="Proc. Natl. Acad. Sci. U.S.A.">
        <title>Divergence of T2R chemosensory receptor families in humans, bonobos, and chimpanzees.</title>
        <authorList>
            <person name="Parry C.M."/>
            <person name="Erkner A."/>
            <person name="le Coutre J."/>
        </authorList>
    </citation>
    <scope>NUCLEOTIDE SEQUENCE [GENOMIC DNA]</scope>
</reference>
<name>T2R13_PANPA</name>
<comment type="function">
    <text evidence="1">Receptor that may play a role in the perception of bitterness and is gustducin-linked. May play a role in sensing the chemical composition of the gastrointestinal content. The activity of this receptor may stimulate alpha gustducin, mediate PLC-beta-2 activation and lead to the gating of TRPM5 (By similarity).</text>
</comment>
<comment type="subcellular location">
    <subcellularLocation>
        <location>Membrane</location>
        <topology>Multi-pass membrane protein</topology>
    </subcellularLocation>
</comment>
<comment type="miscellaneous">
    <text>Most taste cells may be activated by a limited number of bitter compounds; individual taste cells can discriminate among bitter stimuli.</text>
</comment>
<comment type="similarity">
    <text evidence="3">Belongs to the G-protein coupled receptor T2R family.</text>
</comment>
<protein>
    <recommendedName>
        <fullName>Taste receptor type 2 member 13</fullName>
        <shortName>T2R13</shortName>
    </recommendedName>
</protein>
<dbReference type="EMBL" id="AY724851">
    <property type="protein sequence ID" value="AAU21081.1"/>
    <property type="molecule type" value="Genomic_DNA"/>
</dbReference>
<dbReference type="EMBL" id="AY677140">
    <property type="protein sequence ID" value="AAV28568.1"/>
    <property type="molecule type" value="Genomic_DNA"/>
</dbReference>
<dbReference type="RefSeq" id="XP_003829656.1">
    <property type="nucleotide sequence ID" value="XM_003829608.5"/>
</dbReference>
<dbReference type="SMR" id="Q646D8"/>
<dbReference type="STRING" id="9597.ENSPPAP00000002047"/>
<dbReference type="GlyCosmos" id="Q646D8">
    <property type="glycosylation" value="2 sites, No reported glycans"/>
</dbReference>
<dbReference type="Ensembl" id="ENSPPAT00000010070.1">
    <property type="protein sequence ID" value="ENSPPAP00000002047.1"/>
    <property type="gene ID" value="ENSPPAG00000009353.1"/>
</dbReference>
<dbReference type="GeneID" id="100984757"/>
<dbReference type="KEGG" id="pps:100984757"/>
<dbReference type="CTD" id="50838"/>
<dbReference type="eggNOG" id="ENOG502TE6X">
    <property type="taxonomic scope" value="Eukaryota"/>
</dbReference>
<dbReference type="GeneTree" id="ENSGT01100000263477"/>
<dbReference type="OMA" id="KMQLNYK"/>
<dbReference type="OrthoDB" id="12548at9604"/>
<dbReference type="Proteomes" id="UP000240080">
    <property type="component" value="Chromosome 12"/>
</dbReference>
<dbReference type="GO" id="GO:0005886">
    <property type="term" value="C:plasma membrane"/>
    <property type="evidence" value="ECO:0007669"/>
    <property type="project" value="UniProtKB-ARBA"/>
</dbReference>
<dbReference type="GO" id="GO:0033038">
    <property type="term" value="F:bitter taste receptor activity"/>
    <property type="evidence" value="ECO:0007669"/>
    <property type="project" value="Ensembl"/>
</dbReference>
<dbReference type="GO" id="GO:0004930">
    <property type="term" value="F:G protein-coupled receptor activity"/>
    <property type="evidence" value="ECO:0007669"/>
    <property type="project" value="UniProtKB-KW"/>
</dbReference>
<dbReference type="GO" id="GO:0032467">
    <property type="term" value="P:positive regulation of cytokinesis"/>
    <property type="evidence" value="ECO:0007669"/>
    <property type="project" value="Ensembl"/>
</dbReference>
<dbReference type="FunFam" id="1.20.1070.10:FF:000042">
    <property type="entry name" value="Taste receptor type 2 member 7"/>
    <property type="match status" value="1"/>
</dbReference>
<dbReference type="Gene3D" id="1.20.1070.10">
    <property type="entry name" value="Rhodopsin 7-helix transmembrane proteins"/>
    <property type="match status" value="1"/>
</dbReference>
<dbReference type="InterPro" id="IPR007960">
    <property type="entry name" value="TAS2R"/>
</dbReference>
<dbReference type="PANTHER" id="PTHR11394">
    <property type="entry name" value="TASTE RECEPTOR TYPE 2"/>
    <property type="match status" value="1"/>
</dbReference>
<dbReference type="PANTHER" id="PTHR11394:SF28">
    <property type="entry name" value="TASTE RECEPTOR TYPE 2 MEMBER 13"/>
    <property type="match status" value="1"/>
</dbReference>
<dbReference type="Pfam" id="PF05296">
    <property type="entry name" value="TAS2R"/>
    <property type="match status" value="1"/>
</dbReference>
<dbReference type="SUPFAM" id="SSF81321">
    <property type="entry name" value="Family A G protein-coupled receptor-like"/>
    <property type="match status" value="1"/>
</dbReference>